<feature type="signal peptide" evidence="1">
    <location>
        <begin position="1"/>
        <end position="23"/>
    </location>
</feature>
<feature type="chain" id="PRO_0000005152" description="C-C motif chemokine 2">
    <location>
        <begin position="24"/>
        <end position="125"/>
    </location>
</feature>
<feature type="region of interest" description="Disordered" evidence="5">
    <location>
        <begin position="97"/>
        <end position="125"/>
    </location>
</feature>
<feature type="compositionally biased region" description="Polar residues" evidence="5">
    <location>
        <begin position="97"/>
        <end position="109"/>
    </location>
</feature>
<feature type="compositionally biased region" description="Low complexity" evidence="5">
    <location>
        <begin position="110"/>
        <end position="125"/>
    </location>
</feature>
<feature type="modified residue" description="Pyrrolidone carboxylic acid" evidence="3">
    <location>
        <position position="24"/>
    </location>
</feature>
<feature type="glycosylation site" description="N-linked (GlcNAc...) asparagine" evidence="4">
    <location>
        <position position="40"/>
    </location>
</feature>
<feature type="glycosylation site" description="N-linked (GlcNAc...) asparagine" evidence="4">
    <location>
        <position position="55"/>
    </location>
</feature>
<feature type="glycosylation site" description="N-linked (GlcNAc...) asparagine" evidence="4">
    <location>
        <position position="112"/>
    </location>
</feature>
<feature type="disulfide bond" evidence="1">
    <location>
        <begin position="34"/>
        <end position="59"/>
    </location>
</feature>
<feature type="disulfide bond" evidence="1">
    <location>
        <begin position="35"/>
        <end position="75"/>
    </location>
</feature>
<organism>
    <name type="scientific">Oryctolagus cuniculus</name>
    <name type="common">Rabbit</name>
    <dbReference type="NCBI Taxonomy" id="9986"/>
    <lineage>
        <taxon>Eukaryota</taxon>
        <taxon>Metazoa</taxon>
        <taxon>Chordata</taxon>
        <taxon>Craniata</taxon>
        <taxon>Vertebrata</taxon>
        <taxon>Euteleostomi</taxon>
        <taxon>Mammalia</taxon>
        <taxon>Eutheria</taxon>
        <taxon>Euarchontoglires</taxon>
        <taxon>Glires</taxon>
        <taxon>Lagomorpha</taxon>
        <taxon>Leporidae</taxon>
        <taxon>Oryctolagus</taxon>
    </lineage>
</organism>
<reference key="1">
    <citation type="journal article" date="1991" name="J. Immunol.">
        <title>Neutrophil attractant/activation protein-1 and monocyte chemoattractant protein-1 in rabbit. cDNA cloning and their expression in spleen cells.</title>
        <authorList>
            <person name="Yoshimura T."/>
            <person name="Yuhki N."/>
        </authorList>
    </citation>
    <scope>NUCLEOTIDE SEQUENCE [MRNA]</scope>
    <source>
        <strain>New Zealand white</strain>
        <tissue>Spleen</tissue>
    </source>
</reference>
<gene>
    <name type="primary">CCL2</name>
    <name type="synonym">SCYA2</name>
</gene>
<proteinExistence type="evidence at transcript level"/>
<protein>
    <recommendedName>
        <fullName>C-C motif chemokine 2</fullName>
    </recommendedName>
    <alternativeName>
        <fullName>Monocyte chemoattractant protein 1</fullName>
    </alternativeName>
    <alternativeName>
        <fullName>Monocyte chemotactic protein 1</fullName>
        <shortName>MCP-1</shortName>
    </alternativeName>
    <alternativeName>
        <fullName>Small-inducible cytokine A2</fullName>
    </alternativeName>
</protein>
<dbReference type="EMBL" id="M57440">
    <property type="protein sequence ID" value="AAA31386.1"/>
    <property type="molecule type" value="mRNA"/>
</dbReference>
<dbReference type="PIR" id="I46857">
    <property type="entry name" value="I46857"/>
</dbReference>
<dbReference type="RefSeq" id="NP_001075763.1">
    <property type="nucleotide sequence ID" value="NM_001082294.1"/>
</dbReference>
<dbReference type="SMR" id="P28292"/>
<dbReference type="FunCoup" id="P28292">
    <property type="interactions" value="71"/>
</dbReference>
<dbReference type="STRING" id="9986.ENSOCUP00000015636"/>
<dbReference type="GlyCosmos" id="P28292">
    <property type="glycosylation" value="3 sites, No reported glycans"/>
</dbReference>
<dbReference type="PaxDb" id="9986-ENSOCUP00000015636"/>
<dbReference type="GeneID" id="100009130"/>
<dbReference type="KEGG" id="ocu:100009130"/>
<dbReference type="CTD" id="6347"/>
<dbReference type="eggNOG" id="ENOG502S6ZP">
    <property type="taxonomic scope" value="Eukaryota"/>
</dbReference>
<dbReference type="InParanoid" id="P28292"/>
<dbReference type="OrthoDB" id="9404618at2759"/>
<dbReference type="Proteomes" id="UP000001811">
    <property type="component" value="Unplaced"/>
</dbReference>
<dbReference type="GO" id="GO:0005615">
    <property type="term" value="C:extracellular space"/>
    <property type="evidence" value="ECO:0007669"/>
    <property type="project" value="UniProtKB-KW"/>
</dbReference>
<dbReference type="GO" id="GO:0048020">
    <property type="term" value="F:CCR chemokine receptor binding"/>
    <property type="evidence" value="ECO:0007669"/>
    <property type="project" value="TreeGrafter"/>
</dbReference>
<dbReference type="GO" id="GO:0008009">
    <property type="term" value="F:chemokine activity"/>
    <property type="evidence" value="ECO:0007669"/>
    <property type="project" value="InterPro"/>
</dbReference>
<dbReference type="GO" id="GO:0061844">
    <property type="term" value="P:antimicrobial humoral immune response mediated by antimicrobial peptide"/>
    <property type="evidence" value="ECO:0007669"/>
    <property type="project" value="TreeGrafter"/>
</dbReference>
<dbReference type="GO" id="GO:0070098">
    <property type="term" value="P:chemokine-mediated signaling pathway"/>
    <property type="evidence" value="ECO:0007669"/>
    <property type="project" value="TreeGrafter"/>
</dbReference>
<dbReference type="GO" id="GO:0048245">
    <property type="term" value="P:eosinophil chemotaxis"/>
    <property type="evidence" value="ECO:0007669"/>
    <property type="project" value="TreeGrafter"/>
</dbReference>
<dbReference type="GO" id="GO:0006954">
    <property type="term" value="P:inflammatory response"/>
    <property type="evidence" value="ECO:0007669"/>
    <property type="project" value="UniProtKB-KW"/>
</dbReference>
<dbReference type="GO" id="GO:0030335">
    <property type="term" value="P:positive regulation of cell migration"/>
    <property type="evidence" value="ECO:0007669"/>
    <property type="project" value="TreeGrafter"/>
</dbReference>
<dbReference type="GO" id="GO:0051968">
    <property type="term" value="P:positive regulation of synaptic transmission, glutamatergic"/>
    <property type="evidence" value="ECO:0000250"/>
    <property type="project" value="UniProtKB"/>
</dbReference>
<dbReference type="GO" id="GO:0019233">
    <property type="term" value="P:sensory perception of pain"/>
    <property type="evidence" value="ECO:0000250"/>
    <property type="project" value="UniProtKB"/>
</dbReference>
<dbReference type="CDD" id="cd00272">
    <property type="entry name" value="Chemokine_CC"/>
    <property type="match status" value="1"/>
</dbReference>
<dbReference type="FunFam" id="2.40.50.40:FF:000002">
    <property type="entry name" value="C-C motif chemokine"/>
    <property type="match status" value="1"/>
</dbReference>
<dbReference type="Gene3D" id="2.40.50.40">
    <property type="match status" value="1"/>
</dbReference>
<dbReference type="InterPro" id="IPR039809">
    <property type="entry name" value="Chemokine_b/g/d"/>
</dbReference>
<dbReference type="InterPro" id="IPR000827">
    <property type="entry name" value="Chemokine_CC_CS"/>
</dbReference>
<dbReference type="InterPro" id="IPR001811">
    <property type="entry name" value="Chemokine_IL8-like_dom"/>
</dbReference>
<dbReference type="InterPro" id="IPR036048">
    <property type="entry name" value="Interleukin_8-like_sf"/>
</dbReference>
<dbReference type="PANTHER" id="PTHR12015:SF98">
    <property type="entry name" value="C-C MOTIF CHEMOKINE 2"/>
    <property type="match status" value="1"/>
</dbReference>
<dbReference type="PANTHER" id="PTHR12015">
    <property type="entry name" value="SMALL INDUCIBLE CYTOKINE A"/>
    <property type="match status" value="1"/>
</dbReference>
<dbReference type="Pfam" id="PF00048">
    <property type="entry name" value="IL8"/>
    <property type="match status" value="1"/>
</dbReference>
<dbReference type="SMART" id="SM00199">
    <property type="entry name" value="SCY"/>
    <property type="match status" value="1"/>
</dbReference>
<dbReference type="SUPFAM" id="SSF54117">
    <property type="entry name" value="Interleukin 8-like chemokines"/>
    <property type="match status" value="1"/>
</dbReference>
<dbReference type="PROSITE" id="PS00472">
    <property type="entry name" value="SMALL_CYTOKINES_CC"/>
    <property type="match status" value="1"/>
</dbReference>
<sequence>MKVSATLLCLLLIAVAFSSHVLAQPDAVNSPVTCCYTFTNKTISVKRLMSYRRINSTKCPKEAVIFMTKLAKGICADPKQKWVQDAIANLDKKMQTPKTLTSYSTTQEHTTNLSSTRTPSTTTSL</sequence>
<keyword id="KW-0145">Chemotaxis</keyword>
<keyword id="KW-0202">Cytokine</keyword>
<keyword id="KW-1015">Disulfide bond</keyword>
<keyword id="KW-0325">Glycoprotein</keyword>
<keyword id="KW-0395">Inflammatory response</keyword>
<keyword id="KW-0873">Pyrrolidone carboxylic acid</keyword>
<keyword id="KW-1185">Reference proteome</keyword>
<keyword id="KW-0964">Secreted</keyword>
<keyword id="KW-0732">Signal</keyword>
<evidence type="ECO:0000250" key="1"/>
<evidence type="ECO:0000250" key="2">
    <source>
        <dbReference type="UniProtKB" id="P10148"/>
    </source>
</evidence>
<evidence type="ECO:0000250" key="3">
    <source>
        <dbReference type="UniProtKB" id="P13500"/>
    </source>
</evidence>
<evidence type="ECO:0000255" key="4"/>
<evidence type="ECO:0000256" key="5">
    <source>
        <dbReference type="SAM" id="MobiDB-lite"/>
    </source>
</evidence>
<evidence type="ECO:0000305" key="6"/>
<name>CCL2_RABIT</name>
<comment type="function">
    <text evidence="2 3">Acts as a ligand for C-C chemokine receptor CCR2 (By similarity). Signals through binding and activation of CCR2 and induces a strong chemotactic response and mobilization of intracellular calcium ions (By similarity). Exhibits a chemotactic activity for monocytes and basophils but not neutrophils or eosinophils (By similarity). Plays an important role in mediating peripheral nerve injury-induced neuropathic pain (By similarity). Increases NMDA-mediated synaptic transmission in both dopamine D1 and D2 receptor-containing neurons, which may be caused by MAPK/ERK-dependent phosphorylation of GRIN2B/NMDAR2B (By similarity).</text>
</comment>
<comment type="subunit">
    <text evidence="3">Monomer or homodimer; in equilibrium. Is tethered on endothelial cells by glycosaminoglycan (GAG) side chains of proteoglycans. Interacts with TNFAIP6 (via Link domain).</text>
</comment>
<comment type="subcellular location">
    <subcellularLocation>
        <location evidence="3">Secreted</location>
    </subcellularLocation>
</comment>
<comment type="PTM">
    <text evidence="3">Processing at the N-terminus can regulate receptor and target cell selectivity (By similarity). Deletion of the N-terminal residue converts it from an activator of basophil to an eosinophil chemoattractant (By similarity).</text>
</comment>
<comment type="PTM">
    <text evidence="3">N-Glycosylated.</text>
</comment>
<comment type="similarity">
    <text evidence="6">Belongs to the intercrine beta (chemokine CC) family.</text>
</comment>
<accession>P28292</accession>